<keyword id="KW-0963">Cytoplasm</keyword>
<keyword id="KW-0413">Isomerase</keyword>
<keyword id="KW-0697">Rotamase</keyword>
<gene>
    <name type="primary">PIG28</name>
</gene>
<organism>
    <name type="scientific">Uromyces fabae</name>
    <name type="common">Rust fungus</name>
    <dbReference type="NCBI Taxonomy" id="55588"/>
    <lineage>
        <taxon>Eukaryota</taxon>
        <taxon>Fungi</taxon>
        <taxon>Dikarya</taxon>
        <taxon>Basidiomycota</taxon>
        <taxon>Pucciniomycotina</taxon>
        <taxon>Pucciniomycetes</taxon>
        <taxon>Pucciniales</taxon>
        <taxon>Pucciniaceae</taxon>
        <taxon>Uromyces</taxon>
    </lineage>
</organism>
<reference key="1">
    <citation type="journal article" date="1997" name="Mol. Plant Microbe Interact.">
        <title>Characterization of in planta-induced rust genes isolated from a haustorium-specific cDNA library.</title>
        <authorList>
            <person name="Hahn M."/>
            <person name="Mendgen K."/>
        </authorList>
    </citation>
    <scope>NUCLEOTIDE SEQUENCE [MRNA]</scope>
    <source>
        <strain>I2</strain>
        <tissue>Haustorium</tissue>
    </source>
</reference>
<dbReference type="EC" id="5.2.1.8"/>
<dbReference type="EMBL" id="U81792">
    <property type="protein sequence ID" value="AAB39880.1"/>
    <property type="molecule type" value="mRNA"/>
</dbReference>
<dbReference type="SMR" id="O00060"/>
<dbReference type="GO" id="GO:0005737">
    <property type="term" value="C:cytoplasm"/>
    <property type="evidence" value="ECO:0007669"/>
    <property type="project" value="UniProtKB-SubCell"/>
</dbReference>
<dbReference type="GO" id="GO:0016018">
    <property type="term" value="F:cyclosporin A binding"/>
    <property type="evidence" value="ECO:0007669"/>
    <property type="project" value="TreeGrafter"/>
</dbReference>
<dbReference type="GO" id="GO:0003755">
    <property type="term" value="F:peptidyl-prolyl cis-trans isomerase activity"/>
    <property type="evidence" value="ECO:0007669"/>
    <property type="project" value="UniProtKB-KW"/>
</dbReference>
<dbReference type="GO" id="GO:0006457">
    <property type="term" value="P:protein folding"/>
    <property type="evidence" value="ECO:0007669"/>
    <property type="project" value="InterPro"/>
</dbReference>
<dbReference type="FunFam" id="2.40.100.10:FF:000013">
    <property type="entry name" value="Peptidyl-prolyl cis-trans isomerase"/>
    <property type="match status" value="1"/>
</dbReference>
<dbReference type="Gene3D" id="2.40.100.10">
    <property type="entry name" value="Cyclophilin-like"/>
    <property type="match status" value="1"/>
</dbReference>
<dbReference type="InterPro" id="IPR029000">
    <property type="entry name" value="Cyclophilin-like_dom_sf"/>
</dbReference>
<dbReference type="InterPro" id="IPR024936">
    <property type="entry name" value="Cyclophilin-type_PPIase"/>
</dbReference>
<dbReference type="InterPro" id="IPR020892">
    <property type="entry name" value="Cyclophilin-type_PPIase_CS"/>
</dbReference>
<dbReference type="InterPro" id="IPR002130">
    <property type="entry name" value="Cyclophilin-type_PPIase_dom"/>
</dbReference>
<dbReference type="PANTHER" id="PTHR11071">
    <property type="entry name" value="PEPTIDYL-PROLYL CIS-TRANS ISOMERASE"/>
    <property type="match status" value="1"/>
</dbReference>
<dbReference type="PANTHER" id="PTHR11071:SF561">
    <property type="entry name" value="PEPTIDYL-PROLYL CIS-TRANS ISOMERASE D-RELATED"/>
    <property type="match status" value="1"/>
</dbReference>
<dbReference type="Pfam" id="PF00160">
    <property type="entry name" value="Pro_isomerase"/>
    <property type="match status" value="1"/>
</dbReference>
<dbReference type="PIRSF" id="PIRSF001467">
    <property type="entry name" value="Peptidylpro_ismrse"/>
    <property type="match status" value="1"/>
</dbReference>
<dbReference type="PRINTS" id="PR00153">
    <property type="entry name" value="CSAPPISMRASE"/>
</dbReference>
<dbReference type="SUPFAM" id="SSF50891">
    <property type="entry name" value="Cyclophilin-like"/>
    <property type="match status" value="1"/>
</dbReference>
<dbReference type="PROSITE" id="PS00170">
    <property type="entry name" value="CSA_PPIASE_1"/>
    <property type="match status" value="1"/>
</dbReference>
<dbReference type="PROSITE" id="PS50072">
    <property type="entry name" value="CSA_PPIASE_2"/>
    <property type="match status" value="1"/>
</dbReference>
<protein>
    <recommendedName>
        <fullName>Peptidyl-prolyl cis-trans isomerase</fullName>
        <shortName>PPIase</shortName>
        <ecNumber>5.2.1.8</ecNumber>
    </recommendedName>
    <alternativeName>
        <fullName>Cyclophilin</fullName>
    </alternativeName>
    <alternativeName>
        <fullName>Cyclosporin A-binding protein</fullName>
    </alternativeName>
    <alternativeName>
        <fullName>Planta-induced rust protein 28</fullName>
    </alternativeName>
    <alternativeName>
        <fullName>Rotamase</fullName>
    </alternativeName>
</protein>
<evidence type="ECO:0000250" key="1"/>
<evidence type="ECO:0000255" key="2">
    <source>
        <dbReference type="PROSITE-ProRule" id="PRU00156"/>
    </source>
</evidence>
<evidence type="ECO:0000305" key="3"/>
<proteinExistence type="evidence at transcript level"/>
<feature type="chain" id="PRO_0000064131" description="Peptidyl-prolyl cis-trans isomerase">
    <location>
        <begin position="1"/>
        <end position="163"/>
    </location>
</feature>
<feature type="domain" description="PPIase cyclophilin-type" evidence="2">
    <location>
        <begin position="5"/>
        <end position="162"/>
    </location>
</feature>
<sequence>MANCYFDVSSNGKPLGRIVFELYDDVVPRTTNNFRQLCLNPPGKGFKHSIFHRVIPDFMIQGGDFTNGNGTGGESIYGKKFEDENFQKKHVERGMLSMANAGPNTNGSQFFITVTKTPWLDGKHVVFGKVIEGYDQVVKAMEKTGSQSGKTSSVLKIEDCGTL</sequence>
<name>CYPH_UROFA</name>
<accession>O00060</accession>
<comment type="function">
    <text>PPIases accelerate the folding of proteins. It catalyzes the cis-trans isomerization of proline imidic peptide bonds in oligopeptides.</text>
</comment>
<comment type="catalytic activity">
    <reaction>
        <text>[protein]-peptidylproline (omega=180) = [protein]-peptidylproline (omega=0)</text>
        <dbReference type="Rhea" id="RHEA:16237"/>
        <dbReference type="Rhea" id="RHEA-COMP:10747"/>
        <dbReference type="Rhea" id="RHEA-COMP:10748"/>
        <dbReference type="ChEBI" id="CHEBI:83833"/>
        <dbReference type="ChEBI" id="CHEBI:83834"/>
        <dbReference type="EC" id="5.2.1.8"/>
    </reaction>
</comment>
<comment type="activity regulation">
    <text>Binds cyclosporin A (CsA). CsA mediates some of its effects via an inhibitory action on PPIase.</text>
</comment>
<comment type="subcellular location">
    <subcellularLocation>
        <location evidence="1">Cytoplasm</location>
    </subcellularLocation>
</comment>
<comment type="developmental stage">
    <text>Haustoria and rust-infected leaves. Also observed, in lower levels, in spores or hyphae formed in vitro.</text>
</comment>
<comment type="similarity">
    <text evidence="3">Belongs to the cyclophilin-type PPIase family. PPIase A subfamily.</text>
</comment>